<proteinExistence type="evidence at protein level"/>
<accession>Q1ECR9</accession>
<accession>Q8LBK5</accession>
<name>RLF8_ARATH</name>
<reference key="1">
    <citation type="journal article" date="2000" name="Nature">
        <title>Sequence and analysis of chromosome 1 of the plant Arabidopsis thaliana.</title>
        <authorList>
            <person name="Theologis A."/>
            <person name="Ecker J.R."/>
            <person name="Palm C.J."/>
            <person name="Federspiel N.A."/>
            <person name="Kaul S."/>
            <person name="White O."/>
            <person name="Alonso J."/>
            <person name="Altafi H."/>
            <person name="Araujo R."/>
            <person name="Bowman C.L."/>
            <person name="Brooks S.Y."/>
            <person name="Buehler E."/>
            <person name="Chan A."/>
            <person name="Chao Q."/>
            <person name="Chen H."/>
            <person name="Cheuk R.F."/>
            <person name="Chin C.W."/>
            <person name="Chung M.K."/>
            <person name="Conn L."/>
            <person name="Conway A.B."/>
            <person name="Conway A.R."/>
            <person name="Creasy T.H."/>
            <person name="Dewar K."/>
            <person name="Dunn P."/>
            <person name="Etgu P."/>
            <person name="Feldblyum T.V."/>
            <person name="Feng J.-D."/>
            <person name="Fong B."/>
            <person name="Fujii C.Y."/>
            <person name="Gill J.E."/>
            <person name="Goldsmith A.D."/>
            <person name="Haas B."/>
            <person name="Hansen N.F."/>
            <person name="Hughes B."/>
            <person name="Huizar L."/>
            <person name="Hunter J.L."/>
            <person name="Jenkins J."/>
            <person name="Johnson-Hopson C."/>
            <person name="Khan S."/>
            <person name="Khaykin E."/>
            <person name="Kim C.J."/>
            <person name="Koo H.L."/>
            <person name="Kremenetskaia I."/>
            <person name="Kurtz D.B."/>
            <person name="Kwan A."/>
            <person name="Lam B."/>
            <person name="Langin-Hooper S."/>
            <person name="Lee A."/>
            <person name="Lee J.M."/>
            <person name="Lenz C.A."/>
            <person name="Li J.H."/>
            <person name="Li Y.-P."/>
            <person name="Lin X."/>
            <person name="Liu S.X."/>
            <person name="Liu Z.A."/>
            <person name="Luros J.S."/>
            <person name="Maiti R."/>
            <person name="Marziali A."/>
            <person name="Militscher J."/>
            <person name="Miranda M."/>
            <person name="Nguyen M."/>
            <person name="Nierman W.C."/>
            <person name="Osborne B.I."/>
            <person name="Pai G."/>
            <person name="Peterson J."/>
            <person name="Pham P.K."/>
            <person name="Rizzo M."/>
            <person name="Rooney T."/>
            <person name="Rowley D."/>
            <person name="Sakano H."/>
            <person name="Salzberg S.L."/>
            <person name="Schwartz J.R."/>
            <person name="Shinn P."/>
            <person name="Southwick A.M."/>
            <person name="Sun H."/>
            <person name="Tallon L.J."/>
            <person name="Tambunga G."/>
            <person name="Toriumi M.J."/>
            <person name="Town C.D."/>
            <person name="Utterback T."/>
            <person name="Van Aken S."/>
            <person name="Vaysberg M."/>
            <person name="Vysotskaia V.S."/>
            <person name="Walker M."/>
            <person name="Wu D."/>
            <person name="Yu G."/>
            <person name="Fraser C.M."/>
            <person name="Venter J.C."/>
            <person name="Davis R.W."/>
        </authorList>
    </citation>
    <scope>NUCLEOTIDE SEQUENCE [LARGE SCALE GENOMIC DNA]</scope>
    <source>
        <strain>cv. Columbia</strain>
    </source>
</reference>
<reference key="2">
    <citation type="journal article" date="2017" name="Plant J.">
        <title>Araport11: a complete reannotation of the Arabidopsis thaliana reference genome.</title>
        <authorList>
            <person name="Cheng C.Y."/>
            <person name="Krishnakumar V."/>
            <person name="Chan A.P."/>
            <person name="Thibaud-Nissen F."/>
            <person name="Schobel S."/>
            <person name="Town C.D."/>
        </authorList>
    </citation>
    <scope>GENOME REANNOTATION</scope>
    <source>
        <strain>cv. Columbia</strain>
    </source>
</reference>
<reference key="3">
    <citation type="submission" date="2006-06" db="EMBL/GenBank/DDBJ databases">
        <title>Arabidopsis ORF clones.</title>
        <authorList>
            <person name="Shinn P."/>
            <person name="Chen H."/>
            <person name="Kim C.J."/>
            <person name="Quinitio C."/>
            <person name="Ecker J.R."/>
        </authorList>
    </citation>
    <scope>NUCLEOTIDE SEQUENCE [LARGE SCALE MRNA]</scope>
    <source>
        <strain>cv. Columbia</strain>
    </source>
</reference>
<reference key="4">
    <citation type="submission" date="2002-03" db="EMBL/GenBank/DDBJ databases">
        <title>Full-length cDNA from Arabidopsis thaliana.</title>
        <authorList>
            <person name="Brover V.V."/>
            <person name="Troukhan M.E."/>
            <person name="Alexandrov N.A."/>
            <person name="Lu Y.-P."/>
            <person name="Flavell R.B."/>
            <person name="Feldmann K.A."/>
        </authorList>
    </citation>
    <scope>NUCLEOTIDE SEQUENCE [LARGE SCALE MRNA]</scope>
</reference>
<reference key="5">
    <citation type="journal article" date="2002" name="In Silico Biol.">
        <title>Peptomics, identification of novel cationic Arabidopsis peptides with conserved sequence motifs.</title>
        <authorList>
            <person name="Olsen A.N."/>
            <person name="Mundy J."/>
            <person name="Skriver K."/>
        </authorList>
    </citation>
    <scope>TISSUE SPECIFICITY</scope>
    <scope>INDUCTION BY ABA AND SENESCENCE</scope>
    <scope>GENE FAMILY</scope>
    <scope>NOMENCLATURE</scope>
</reference>
<organism>
    <name type="scientific">Arabidopsis thaliana</name>
    <name type="common">Mouse-ear cress</name>
    <dbReference type="NCBI Taxonomy" id="3702"/>
    <lineage>
        <taxon>Eukaryota</taxon>
        <taxon>Viridiplantae</taxon>
        <taxon>Streptophyta</taxon>
        <taxon>Embryophyta</taxon>
        <taxon>Tracheophyta</taxon>
        <taxon>Spermatophyta</taxon>
        <taxon>Magnoliopsida</taxon>
        <taxon>eudicotyledons</taxon>
        <taxon>Gunneridae</taxon>
        <taxon>Pentapetalae</taxon>
        <taxon>rosids</taxon>
        <taxon>malvids</taxon>
        <taxon>Brassicales</taxon>
        <taxon>Brassicaceae</taxon>
        <taxon>Camelineae</taxon>
        <taxon>Arabidopsis</taxon>
    </lineage>
</organism>
<evidence type="ECO:0000250" key="1"/>
<evidence type="ECO:0000255" key="2"/>
<evidence type="ECO:0000269" key="3">
    <source>
    </source>
</evidence>
<evidence type="ECO:0000305" key="4"/>
<evidence type="ECO:0007829" key="5">
    <source>
        <dbReference type="PDB" id="6NU4"/>
    </source>
</evidence>
<comment type="function">
    <text evidence="1">Cell signaling peptide that may regulate plant stress, growth, and development. Mediates a rapid alkalinization of extracellular space by mediating a transient increase in the cytoplasmic Ca(2+) concentration leading to a calcium-dependent signaling events through a cell surface receptor and a concomitant activation of some intracellular mitogen-activated protein kinases (By similarity).</text>
</comment>
<comment type="subcellular location">
    <subcellularLocation>
        <location evidence="1">Secreted</location>
    </subcellularLocation>
</comment>
<comment type="tissue specificity">
    <text evidence="3">Expressed in leaves and flowers.</text>
</comment>
<comment type="induction">
    <text evidence="3">Slightly induced by abscisic acid (ABA) and accumulates during senescence.</text>
</comment>
<comment type="similarity">
    <text evidence="4">Belongs to the plant rapid alkalinization factor (RALF) family.</text>
</comment>
<feature type="signal peptide" evidence="2">
    <location>
        <begin position="1"/>
        <end position="28"/>
    </location>
</feature>
<feature type="chain" id="PRO_0000420299" description="Protein RALF-like 8">
    <location>
        <begin position="29"/>
        <end position="82"/>
    </location>
</feature>
<feature type="disulfide bond" evidence="1">
    <location>
        <begin position="47"/>
        <end position="55"/>
    </location>
</feature>
<feature type="disulfide bond" evidence="1">
    <location>
        <begin position="67"/>
        <end position="73"/>
    </location>
</feature>
<feature type="sequence conflict" description="In Ref. 4; AAM64713." evidence="4" ref="4">
    <original>K</original>
    <variation>N</variation>
    <location>
        <position position="5"/>
    </location>
</feature>
<feature type="strand" evidence="5">
    <location>
        <begin position="49"/>
        <end position="51"/>
    </location>
</feature>
<feature type="turn" evidence="5">
    <location>
        <begin position="52"/>
        <end position="54"/>
    </location>
</feature>
<dbReference type="EMBL" id="AC005850">
    <property type="status" value="NOT_ANNOTATED_CDS"/>
    <property type="molecule type" value="Genomic_DNA"/>
</dbReference>
<dbReference type="EMBL" id="CP002684">
    <property type="protein sequence ID" value="AEE33855.1"/>
    <property type="molecule type" value="Genomic_DNA"/>
</dbReference>
<dbReference type="EMBL" id="BT025636">
    <property type="protein sequence ID" value="ABF74697.1"/>
    <property type="molecule type" value="mRNA"/>
</dbReference>
<dbReference type="EMBL" id="AY087155">
    <property type="protein sequence ID" value="AAM64713.1"/>
    <property type="molecule type" value="mRNA"/>
</dbReference>
<dbReference type="RefSeq" id="NP_564778.1">
    <property type="nucleotide sequence ID" value="NM_104837.2"/>
</dbReference>
<dbReference type="PDB" id="6NU4">
    <property type="method" value="NMR"/>
    <property type="chains" value="A=27-82"/>
</dbReference>
<dbReference type="PDBsum" id="6NU4"/>
<dbReference type="SMR" id="Q1ECR9"/>
<dbReference type="STRING" id="3702.Q1ECR9"/>
<dbReference type="PaxDb" id="3702-AT1G61563.1"/>
<dbReference type="ProteomicsDB" id="228155"/>
<dbReference type="EnsemblPlants" id="AT1G61563.1">
    <property type="protein sequence ID" value="AT1G61563.1"/>
    <property type="gene ID" value="AT1G61563"/>
</dbReference>
<dbReference type="GeneID" id="842451"/>
<dbReference type="Gramene" id="AT1G61563.1">
    <property type="protein sequence ID" value="AT1G61563.1"/>
    <property type="gene ID" value="AT1G61563"/>
</dbReference>
<dbReference type="KEGG" id="ath:AT1G61563"/>
<dbReference type="Araport" id="AT1G61563"/>
<dbReference type="TAIR" id="AT1G61563">
    <property type="gene designation" value="RALFL8"/>
</dbReference>
<dbReference type="eggNOG" id="ENOG502SW1C">
    <property type="taxonomic scope" value="Eukaryota"/>
</dbReference>
<dbReference type="HOGENOM" id="CLU_184731_1_0_1"/>
<dbReference type="InParanoid" id="Q1ECR9"/>
<dbReference type="OMA" id="EARYIDY"/>
<dbReference type="OrthoDB" id="1089400at2759"/>
<dbReference type="PhylomeDB" id="Q1ECR9"/>
<dbReference type="PRO" id="PR:Q1ECR9"/>
<dbReference type="Proteomes" id="UP000006548">
    <property type="component" value="Chromosome 1"/>
</dbReference>
<dbReference type="ExpressionAtlas" id="Q1ECR9">
    <property type="expression patterns" value="baseline and differential"/>
</dbReference>
<dbReference type="GO" id="GO:0048046">
    <property type="term" value="C:apoplast"/>
    <property type="evidence" value="ECO:0000250"/>
    <property type="project" value="TAIR"/>
</dbReference>
<dbReference type="GO" id="GO:0005179">
    <property type="term" value="F:hormone activity"/>
    <property type="evidence" value="ECO:0000250"/>
    <property type="project" value="UniProtKB"/>
</dbReference>
<dbReference type="GO" id="GO:0019722">
    <property type="term" value="P:calcium-mediated signaling"/>
    <property type="evidence" value="ECO:0000250"/>
    <property type="project" value="UniProtKB"/>
</dbReference>
<dbReference type="GO" id="GO:0007267">
    <property type="term" value="P:cell-cell signaling"/>
    <property type="evidence" value="ECO:0000250"/>
    <property type="project" value="TAIR"/>
</dbReference>
<dbReference type="GO" id="GO:0007204">
    <property type="term" value="P:positive regulation of cytosolic calcium ion concentration"/>
    <property type="evidence" value="ECO:0000269"/>
    <property type="project" value="DisProt"/>
</dbReference>
<dbReference type="GO" id="GO:0010082">
    <property type="term" value="P:regulation of root meristem growth"/>
    <property type="evidence" value="ECO:0000314"/>
    <property type="project" value="DisProt"/>
</dbReference>
<dbReference type="InterPro" id="IPR008801">
    <property type="entry name" value="RALF"/>
</dbReference>
<dbReference type="PANTHER" id="PTHR34270">
    <property type="entry name" value="PROTEIN RALF-LIKE 15-RELATED"/>
    <property type="match status" value="1"/>
</dbReference>
<dbReference type="PANTHER" id="PTHR34270:SF12">
    <property type="entry name" value="PROTEIN RALF-LIKE 15-RELATED"/>
    <property type="match status" value="1"/>
</dbReference>
<dbReference type="Pfam" id="PF05498">
    <property type="entry name" value="RALF"/>
    <property type="match status" value="1"/>
</dbReference>
<protein>
    <recommendedName>
        <fullName>Protein RALF-like 8</fullName>
    </recommendedName>
</protein>
<keyword id="KW-0002">3D-structure</keyword>
<keyword id="KW-1015">Disulfide bond</keyword>
<keyword id="KW-0372">Hormone</keyword>
<keyword id="KW-1185">Reference proteome</keyword>
<keyword id="KW-0964">Secreted</keyword>
<keyword id="KW-0732">Signal</keyword>
<gene>
    <name type="primary">RALFL8</name>
    <name type="ordered locus">At1g61563</name>
    <name type="ORF">T25B24</name>
</gene>
<sequence length="82" mass="8906">MGMSKSIKVILSLALVVFLALAGTKVEASVRYITYPAIDRGDHAVHCDKAHPNTCKKKQANPYRRGCGVLEGCHRETGPKPT</sequence>